<proteinExistence type="evidence at protein level"/>
<reference key="1">
    <citation type="journal article" date="2002" name="Proc. Natl. Acad. Sci. U.S.A.">
        <title>Extensive mosaic structure revealed by the complete genome sequence of uropathogenic Escherichia coli.</title>
        <authorList>
            <person name="Welch R.A."/>
            <person name="Burland V."/>
            <person name="Plunkett G. III"/>
            <person name="Redford P."/>
            <person name="Roesch P."/>
            <person name="Rasko D."/>
            <person name="Buckles E.L."/>
            <person name="Liou S.-R."/>
            <person name="Boutin A."/>
            <person name="Hackett J."/>
            <person name="Stroud D."/>
            <person name="Mayhew G.F."/>
            <person name="Rose D.J."/>
            <person name="Zhou S."/>
            <person name="Schwartz D.C."/>
            <person name="Perna N.T."/>
            <person name="Mobley H.L.T."/>
            <person name="Donnenberg M.S."/>
            <person name="Blattner F.R."/>
        </authorList>
    </citation>
    <scope>NUCLEOTIDE SEQUENCE [LARGE SCALE GENOMIC DNA]</scope>
    <source>
        <strain>CFT073 / ATCC 700928 / UPEC</strain>
    </source>
</reference>
<reference key="2">
    <citation type="journal article" date="2006" name="J. Bacteriol.">
        <title>Crystal structure of TDP-fucosamine acetyltransferase (WecD) from Escherichia coli, an enzyme required for enterobacterial common antigen synthesis.</title>
        <authorList>
            <person name="Hung M.N."/>
            <person name="Rangarajan E."/>
            <person name="Munger C."/>
            <person name="Nadeau G."/>
            <person name="Sulea T."/>
            <person name="Matte A."/>
        </authorList>
    </citation>
    <scope>X-RAY CRYSTALLOGRAPHY (1.66 ANGSTROMS) OF 2-224 OF APOENZYME AND IN COMPLEX WITH ACETYL-COA</scope>
    <scope>FUNCTION</scope>
    <scope>CATALYTIC ACTIVITY</scope>
    <scope>PATHWAY</scope>
    <scope>ACTIVE SITE</scope>
    <scope>SUBUNIT</scope>
    <source>
        <strain>CFT073 / ATCC 700928 / UPEC</strain>
    </source>
</reference>
<gene>
    <name evidence="1 3" type="primary">wecD</name>
    <name type="ordered locus">c4710</name>
</gene>
<keyword id="KW-0002">3D-structure</keyword>
<keyword id="KW-0012">Acyltransferase</keyword>
<keyword id="KW-1185">Reference proteome</keyword>
<keyword id="KW-0808">Transferase</keyword>
<evidence type="ECO:0000255" key="1">
    <source>
        <dbReference type="HAMAP-Rule" id="MF_02027"/>
    </source>
</evidence>
<evidence type="ECO:0000269" key="2">
    <source>
    </source>
</evidence>
<evidence type="ECO:0000303" key="3">
    <source>
    </source>
</evidence>
<evidence type="ECO:0000305" key="4"/>
<evidence type="ECO:0000305" key="5">
    <source>
    </source>
</evidence>
<evidence type="ECO:0007829" key="6">
    <source>
        <dbReference type="PDB" id="2FT0"/>
    </source>
</evidence>
<dbReference type="EC" id="2.3.1.210" evidence="1 2"/>
<dbReference type="EMBL" id="AE014075">
    <property type="protein sequence ID" value="AAN83143.1"/>
    <property type="molecule type" value="Genomic_DNA"/>
</dbReference>
<dbReference type="RefSeq" id="WP_001145189.1">
    <property type="nucleotide sequence ID" value="NZ_CP051263.1"/>
</dbReference>
<dbReference type="PDB" id="2FS5">
    <property type="method" value="X-ray"/>
    <property type="resolution" value="1.95 A"/>
    <property type="chains" value="A/B=2-224"/>
</dbReference>
<dbReference type="PDB" id="2FT0">
    <property type="method" value="X-ray"/>
    <property type="resolution" value="1.66 A"/>
    <property type="chains" value="A/B=2-224"/>
</dbReference>
<dbReference type="PDBsum" id="2FS5"/>
<dbReference type="PDBsum" id="2FT0"/>
<dbReference type="SMR" id="Q8FBQ3"/>
<dbReference type="STRING" id="199310.c4710"/>
<dbReference type="KEGG" id="ecc:c4710"/>
<dbReference type="eggNOG" id="COG0456">
    <property type="taxonomic scope" value="Bacteria"/>
</dbReference>
<dbReference type="HOGENOM" id="CLU_101319_1_0_6"/>
<dbReference type="BioCyc" id="ECOL199310:C4710-MONOMER"/>
<dbReference type="BRENDA" id="2.3.1.210">
    <property type="organism ID" value="2026"/>
</dbReference>
<dbReference type="UniPathway" id="UPA00566"/>
<dbReference type="EvolutionaryTrace" id="Q8FBQ3"/>
<dbReference type="Proteomes" id="UP000001410">
    <property type="component" value="Chromosome"/>
</dbReference>
<dbReference type="GO" id="GO:0008080">
    <property type="term" value="F:N-acetyltransferase activity"/>
    <property type="evidence" value="ECO:0007669"/>
    <property type="project" value="InterPro"/>
</dbReference>
<dbReference type="GO" id="GO:0009246">
    <property type="term" value="P:enterobacterial common antigen biosynthetic process"/>
    <property type="evidence" value="ECO:0007669"/>
    <property type="project" value="UniProtKB-UniRule"/>
</dbReference>
<dbReference type="CDD" id="cd04301">
    <property type="entry name" value="NAT_SF"/>
    <property type="match status" value="1"/>
</dbReference>
<dbReference type="FunFam" id="3.40.630.30:FF:000044">
    <property type="entry name" value="dTDP-fucosamine acetyltransferase"/>
    <property type="match status" value="1"/>
</dbReference>
<dbReference type="Gene3D" id="3.40.630.30">
    <property type="match status" value="1"/>
</dbReference>
<dbReference type="HAMAP" id="MF_02027">
    <property type="entry name" value="WecD_RffC"/>
    <property type="match status" value="1"/>
</dbReference>
<dbReference type="InterPro" id="IPR012752">
    <property type="entry name" value="AcTrfase_WecD"/>
</dbReference>
<dbReference type="InterPro" id="IPR016181">
    <property type="entry name" value="Acyl_CoA_acyltransferase"/>
</dbReference>
<dbReference type="InterPro" id="IPR002110">
    <property type="entry name" value="Ankyrin_rpt"/>
</dbReference>
<dbReference type="InterPro" id="IPR050832">
    <property type="entry name" value="Bact_Acetyltransf"/>
</dbReference>
<dbReference type="InterPro" id="IPR000182">
    <property type="entry name" value="GNAT_dom"/>
</dbReference>
<dbReference type="NCBIfam" id="NF008212">
    <property type="entry name" value="PRK10975.1"/>
    <property type="match status" value="1"/>
</dbReference>
<dbReference type="NCBIfam" id="TIGR02382">
    <property type="entry name" value="wecD_rffC"/>
    <property type="match status" value="1"/>
</dbReference>
<dbReference type="PANTHER" id="PTHR43877:SF2">
    <property type="entry name" value="AMINOALKYLPHOSPHONATE N-ACETYLTRANSFERASE-RELATED"/>
    <property type="match status" value="1"/>
</dbReference>
<dbReference type="PANTHER" id="PTHR43877">
    <property type="entry name" value="AMINOALKYLPHOSPHONATE N-ACETYLTRANSFERASE-RELATED-RELATED"/>
    <property type="match status" value="1"/>
</dbReference>
<dbReference type="Pfam" id="PF00583">
    <property type="entry name" value="Acetyltransf_1"/>
    <property type="match status" value="1"/>
</dbReference>
<dbReference type="SUPFAM" id="SSF55729">
    <property type="entry name" value="Acyl-CoA N-acyltransferases (Nat)"/>
    <property type="match status" value="1"/>
</dbReference>
<dbReference type="PROSITE" id="PS51186">
    <property type="entry name" value="GNAT"/>
    <property type="match status" value="1"/>
</dbReference>
<protein>
    <recommendedName>
        <fullName evidence="1 4">dTDP-fucosamine acetyltransferase</fullName>
        <ecNumber evidence="1 2">2.3.1.210</ecNumber>
    </recommendedName>
    <alternativeName>
        <fullName evidence="1">TDP-fucosamine acetyltransferase</fullName>
    </alternativeName>
    <alternativeName>
        <fullName evidence="1">dTDP-4-amino-4,6-dideoxy-D-galactose acyltransferase</fullName>
    </alternativeName>
</protein>
<sequence length="224" mass="24218">MPVRASIEPLTWENAFFGVNSAIVRITSEAPLLTPDALAPWSRVQAKIAASNTGELDALQQLGFSLVEGEVDLALPVNNVSDSGAVVAQETDIPALRQLASAAFAQSRFRAPWYAPDASGRFYAQWIENAVRGTFDHQCLILRAASGDIRGYVSLRELNATDARIGLLAGRGAGAELMQTALNWAYARGKTTLRVATQMGNTAALKRYIQSGANVESTAYWLYR</sequence>
<comment type="function">
    <text evidence="1 2">Catalyzes the acetylation of dTDP-fucosamine (dTDP-4-amino-4,6-dideoxy-D-galactose) to dTDP-Fuc4NAc, which is utilized in the biosynthesis of the enterobacterial common antigen (ECA).</text>
</comment>
<comment type="catalytic activity">
    <reaction evidence="1 2">
        <text>dTDP-4-amino-4,6-dideoxy-alpha-D-galactose + acetyl-CoA = dTDP-4-acetamido-4,6-dideoxy-alpha-D-galactose + CoA + H(+)</text>
        <dbReference type="Rhea" id="RHEA:34443"/>
        <dbReference type="ChEBI" id="CHEBI:15378"/>
        <dbReference type="ChEBI" id="CHEBI:57287"/>
        <dbReference type="ChEBI" id="CHEBI:57288"/>
        <dbReference type="ChEBI" id="CHEBI:68492"/>
        <dbReference type="ChEBI" id="CHEBI:68493"/>
        <dbReference type="EC" id="2.3.1.210"/>
    </reaction>
</comment>
<comment type="pathway">
    <text evidence="1 5">Bacterial outer membrane biogenesis; enterobacterial common antigen biosynthesis.</text>
</comment>
<comment type="subunit">
    <text evidence="1 2">Homodimer.</text>
</comment>
<comment type="similarity">
    <text evidence="1 4">Belongs to the WecD family.</text>
</comment>
<name>WECD_ECOL6</name>
<accession>Q8FBQ3</accession>
<feature type="chain" id="PRO_0000421036" description="dTDP-fucosamine acetyltransferase">
    <location>
        <begin position="1"/>
        <end position="224"/>
    </location>
</feature>
<feature type="domain" description="N-acetyltransferase" evidence="1">
    <location>
        <begin position="94"/>
        <end position="224"/>
    </location>
</feature>
<feature type="active site" description="Proton donor" evidence="1 5">
    <location>
        <position position="208"/>
    </location>
</feature>
<feature type="binding site" evidence="1 2">
    <location>
        <begin position="168"/>
        <end position="174"/>
    </location>
    <ligand>
        <name>acetyl-CoA</name>
        <dbReference type="ChEBI" id="CHEBI:57288"/>
    </ligand>
</feature>
<feature type="binding site" evidence="1 2">
    <location>
        <position position="201"/>
    </location>
    <ligand>
        <name>acetyl-CoA</name>
        <dbReference type="ChEBI" id="CHEBI:57288"/>
    </ligand>
</feature>
<feature type="binding site" evidence="1 2">
    <location>
        <position position="207"/>
    </location>
    <ligand>
        <name>acetyl-CoA</name>
        <dbReference type="ChEBI" id="CHEBI:57288"/>
    </ligand>
</feature>
<feature type="strand" evidence="6">
    <location>
        <begin position="4"/>
        <end position="9"/>
    </location>
</feature>
<feature type="helix" evidence="6">
    <location>
        <begin position="11"/>
        <end position="17"/>
    </location>
</feature>
<feature type="strand" evidence="6">
    <location>
        <begin position="21"/>
        <end position="26"/>
    </location>
</feature>
<feature type="strand" evidence="6">
    <location>
        <begin position="28"/>
        <end position="30"/>
    </location>
</feature>
<feature type="helix" evidence="6">
    <location>
        <begin position="35"/>
        <end position="38"/>
    </location>
</feature>
<feature type="strand" evidence="6">
    <location>
        <begin position="42"/>
        <end position="49"/>
    </location>
</feature>
<feature type="helix" evidence="6">
    <location>
        <begin position="53"/>
        <end position="61"/>
    </location>
</feature>
<feature type="strand" evidence="6">
    <location>
        <begin position="65"/>
        <end position="76"/>
    </location>
</feature>
<feature type="helix" evidence="6">
    <location>
        <begin position="90"/>
        <end position="92"/>
    </location>
</feature>
<feature type="helix" evidence="6">
    <location>
        <begin position="93"/>
        <end position="103"/>
    </location>
</feature>
<feature type="turn" evidence="6">
    <location>
        <begin position="104"/>
        <end position="106"/>
    </location>
</feature>
<feature type="turn" evidence="6">
    <location>
        <begin position="111"/>
        <end position="113"/>
    </location>
</feature>
<feature type="helix" evidence="6">
    <location>
        <begin position="118"/>
        <end position="131"/>
    </location>
</feature>
<feature type="strand" evidence="6">
    <location>
        <begin position="137"/>
        <end position="143"/>
    </location>
</feature>
<feature type="strand" evidence="6">
    <location>
        <begin position="149"/>
        <end position="157"/>
    </location>
</feature>
<feature type="strand" evidence="6">
    <location>
        <begin position="159"/>
        <end position="169"/>
    </location>
</feature>
<feature type="helix" evidence="6">
    <location>
        <begin position="174"/>
        <end position="187"/>
    </location>
</feature>
<feature type="strand" evidence="6">
    <location>
        <begin position="191"/>
        <end position="198"/>
    </location>
</feature>
<feature type="helix" evidence="6">
    <location>
        <begin position="202"/>
        <end position="210"/>
    </location>
</feature>
<feature type="strand" evidence="6">
    <location>
        <begin position="214"/>
        <end position="223"/>
    </location>
</feature>
<organism>
    <name type="scientific">Escherichia coli O6:H1 (strain CFT073 / ATCC 700928 / UPEC)</name>
    <dbReference type="NCBI Taxonomy" id="199310"/>
    <lineage>
        <taxon>Bacteria</taxon>
        <taxon>Pseudomonadati</taxon>
        <taxon>Pseudomonadota</taxon>
        <taxon>Gammaproteobacteria</taxon>
        <taxon>Enterobacterales</taxon>
        <taxon>Enterobacteriaceae</taxon>
        <taxon>Escherichia</taxon>
    </lineage>
</organism>